<name>MTNN_BUCBP</name>
<accession>Q89AQ7</accession>
<dbReference type="EC" id="3.2.2.9" evidence="1"/>
<dbReference type="EMBL" id="AE016826">
    <property type="protein sequence ID" value="AAO26924.1"/>
    <property type="molecule type" value="Genomic_DNA"/>
</dbReference>
<dbReference type="RefSeq" id="WP_011091325.1">
    <property type="nucleotide sequence ID" value="NC_004545.1"/>
</dbReference>
<dbReference type="SMR" id="Q89AQ7"/>
<dbReference type="STRING" id="224915.bbp_192"/>
<dbReference type="KEGG" id="bab:bbp_192"/>
<dbReference type="eggNOG" id="COG0775">
    <property type="taxonomic scope" value="Bacteria"/>
</dbReference>
<dbReference type="HOGENOM" id="CLU_031248_2_2_6"/>
<dbReference type="OrthoDB" id="9792278at2"/>
<dbReference type="UniPathway" id="UPA00904">
    <property type="reaction ID" value="UER00871"/>
</dbReference>
<dbReference type="Proteomes" id="UP000000601">
    <property type="component" value="Chromosome"/>
</dbReference>
<dbReference type="GO" id="GO:0005829">
    <property type="term" value="C:cytosol"/>
    <property type="evidence" value="ECO:0007669"/>
    <property type="project" value="TreeGrafter"/>
</dbReference>
<dbReference type="GO" id="GO:0008782">
    <property type="term" value="F:adenosylhomocysteine nucleosidase activity"/>
    <property type="evidence" value="ECO:0007669"/>
    <property type="project" value="UniProtKB-UniRule"/>
</dbReference>
<dbReference type="GO" id="GO:0008930">
    <property type="term" value="F:methylthioadenosine nucleosidase activity"/>
    <property type="evidence" value="ECO:0007669"/>
    <property type="project" value="UniProtKB-UniRule"/>
</dbReference>
<dbReference type="GO" id="GO:0019509">
    <property type="term" value="P:L-methionine salvage from methylthioadenosine"/>
    <property type="evidence" value="ECO:0007669"/>
    <property type="project" value="UniProtKB-UniRule"/>
</dbReference>
<dbReference type="GO" id="GO:0019284">
    <property type="term" value="P:L-methionine salvage from S-adenosylmethionine"/>
    <property type="evidence" value="ECO:0007669"/>
    <property type="project" value="TreeGrafter"/>
</dbReference>
<dbReference type="GO" id="GO:0046124">
    <property type="term" value="P:purine deoxyribonucleoside catabolic process"/>
    <property type="evidence" value="ECO:0007669"/>
    <property type="project" value="UniProtKB-UniRule"/>
</dbReference>
<dbReference type="CDD" id="cd09008">
    <property type="entry name" value="MTAN"/>
    <property type="match status" value="1"/>
</dbReference>
<dbReference type="Gene3D" id="3.40.50.1580">
    <property type="entry name" value="Nucleoside phosphorylase domain"/>
    <property type="match status" value="1"/>
</dbReference>
<dbReference type="HAMAP" id="MF_01684">
    <property type="entry name" value="Salvage_MtnN"/>
    <property type="match status" value="1"/>
</dbReference>
<dbReference type="InterPro" id="IPR010049">
    <property type="entry name" value="MTA_SAH_Nsdase"/>
</dbReference>
<dbReference type="InterPro" id="IPR000845">
    <property type="entry name" value="Nucleoside_phosphorylase_d"/>
</dbReference>
<dbReference type="InterPro" id="IPR035994">
    <property type="entry name" value="Nucleoside_phosphorylase_sf"/>
</dbReference>
<dbReference type="NCBIfam" id="TIGR01704">
    <property type="entry name" value="MTA_SAH-Nsdase"/>
    <property type="match status" value="1"/>
</dbReference>
<dbReference type="NCBIfam" id="NF004079">
    <property type="entry name" value="PRK05584.1"/>
    <property type="match status" value="1"/>
</dbReference>
<dbReference type="PANTHER" id="PTHR46832">
    <property type="entry name" value="5'-METHYLTHIOADENOSINE/S-ADENOSYLHOMOCYSTEINE NUCLEOSIDASE"/>
    <property type="match status" value="1"/>
</dbReference>
<dbReference type="PANTHER" id="PTHR46832:SF1">
    <property type="entry name" value="5'-METHYLTHIOADENOSINE_S-ADENOSYLHOMOCYSTEINE NUCLEOSIDASE"/>
    <property type="match status" value="1"/>
</dbReference>
<dbReference type="Pfam" id="PF01048">
    <property type="entry name" value="PNP_UDP_1"/>
    <property type="match status" value="1"/>
</dbReference>
<dbReference type="SUPFAM" id="SSF53167">
    <property type="entry name" value="Purine and uridine phosphorylases"/>
    <property type="match status" value="1"/>
</dbReference>
<sequence>MKKEIKKNYRIGIIAALQQEVQILFNKLKNYKINKISNITFYIGNIHNIHVVLAKSGVGKVFSGITCALLLQKYKVKFIINIGSAGSLNKNLKPGSIIIPTNVCYHDVNLTAFGYSIGQIKNCPKTFLSNTLMLKLTEKYLFENKIKYQKKLMISGDIFIDTCEKKSLLKKRFPKAIAVDMEAAAIAHVCYQFNIPILIIKSISDSSDINAADNFKYFINLASKNSSLVTINVLQTLFKNTKNILFDNNNRC</sequence>
<reference key="1">
    <citation type="journal article" date="2003" name="Proc. Natl. Acad. Sci. U.S.A.">
        <title>Reductive genome evolution in Buchnera aphidicola.</title>
        <authorList>
            <person name="van Ham R.C.H.J."/>
            <person name="Kamerbeek J."/>
            <person name="Palacios C."/>
            <person name="Rausell C."/>
            <person name="Abascal F."/>
            <person name="Bastolla U."/>
            <person name="Fernandez J.M."/>
            <person name="Jimenez L."/>
            <person name="Postigo M."/>
            <person name="Silva F.J."/>
            <person name="Tamames J."/>
            <person name="Viguera E."/>
            <person name="Latorre A."/>
            <person name="Valencia A."/>
            <person name="Moran F."/>
            <person name="Moya A."/>
        </authorList>
    </citation>
    <scope>NUCLEOTIDE SEQUENCE [LARGE SCALE GENOMIC DNA]</scope>
    <source>
        <strain>Bp</strain>
    </source>
</reference>
<organism>
    <name type="scientific">Buchnera aphidicola subsp. Baizongia pistaciae (strain Bp)</name>
    <dbReference type="NCBI Taxonomy" id="224915"/>
    <lineage>
        <taxon>Bacteria</taxon>
        <taxon>Pseudomonadati</taxon>
        <taxon>Pseudomonadota</taxon>
        <taxon>Gammaproteobacteria</taxon>
        <taxon>Enterobacterales</taxon>
        <taxon>Erwiniaceae</taxon>
        <taxon>Buchnera</taxon>
    </lineage>
</organism>
<gene>
    <name evidence="1" type="primary">mtnN</name>
    <name type="synonym">pfs</name>
    <name type="ordered locus">bbp_192</name>
</gene>
<keyword id="KW-0028">Amino-acid biosynthesis</keyword>
<keyword id="KW-0378">Hydrolase</keyword>
<keyword id="KW-0486">Methionine biosynthesis</keyword>
<keyword id="KW-1185">Reference proteome</keyword>
<comment type="function">
    <text evidence="1">Catalyzes the irreversible cleavage of the glycosidic bond in both 5'-methylthioadenosine (MTA) and S-adenosylhomocysteine (SAH/AdoHcy) to adenine and the corresponding thioribose, 5'-methylthioribose and S-ribosylhomocysteine, respectively. Also cleaves 5'-deoxyadenosine, a toxic by-product of radical S-adenosylmethionine (SAM) enzymes, into 5-deoxyribose and adenine. Thus, is required for in vivo function of the radical SAM enzymes biotin synthase and lipoic acid synthase, that are inhibited by 5'-deoxyadenosine accumulation.</text>
</comment>
<comment type="catalytic activity">
    <reaction evidence="1">
        <text>S-adenosyl-L-homocysteine + H2O = S-(5-deoxy-D-ribos-5-yl)-L-homocysteine + adenine</text>
        <dbReference type="Rhea" id="RHEA:17805"/>
        <dbReference type="ChEBI" id="CHEBI:15377"/>
        <dbReference type="ChEBI" id="CHEBI:16708"/>
        <dbReference type="ChEBI" id="CHEBI:57856"/>
        <dbReference type="ChEBI" id="CHEBI:58195"/>
        <dbReference type="EC" id="3.2.2.9"/>
    </reaction>
</comment>
<comment type="catalytic activity">
    <reaction evidence="1">
        <text>S-methyl-5'-thioadenosine + H2O = 5-(methylsulfanyl)-D-ribose + adenine</text>
        <dbReference type="Rhea" id="RHEA:13617"/>
        <dbReference type="ChEBI" id="CHEBI:15377"/>
        <dbReference type="ChEBI" id="CHEBI:16708"/>
        <dbReference type="ChEBI" id="CHEBI:17509"/>
        <dbReference type="ChEBI" id="CHEBI:78440"/>
        <dbReference type="EC" id="3.2.2.9"/>
    </reaction>
</comment>
<comment type="catalytic activity">
    <reaction evidence="1">
        <text>5'-deoxyadenosine + H2O = 5-deoxy-D-ribose + adenine</text>
        <dbReference type="Rhea" id="RHEA:29859"/>
        <dbReference type="ChEBI" id="CHEBI:15377"/>
        <dbReference type="ChEBI" id="CHEBI:16708"/>
        <dbReference type="ChEBI" id="CHEBI:17319"/>
        <dbReference type="ChEBI" id="CHEBI:149540"/>
        <dbReference type="EC" id="3.2.2.9"/>
    </reaction>
    <physiologicalReaction direction="left-to-right" evidence="1">
        <dbReference type="Rhea" id="RHEA:29860"/>
    </physiologicalReaction>
</comment>
<comment type="pathway">
    <text evidence="1">Amino-acid biosynthesis; L-methionine biosynthesis via salvage pathway; S-methyl-5-thio-alpha-D-ribose 1-phosphate from S-methyl-5'-thioadenosine (hydrolase route): step 1/2.</text>
</comment>
<comment type="subunit">
    <text evidence="1">Homodimer.</text>
</comment>
<comment type="similarity">
    <text evidence="1">Belongs to the PNP/UDP phosphorylase family. MtnN subfamily.</text>
</comment>
<evidence type="ECO:0000255" key="1">
    <source>
        <dbReference type="HAMAP-Rule" id="MF_01684"/>
    </source>
</evidence>
<protein>
    <recommendedName>
        <fullName evidence="1">5'-methylthioadenosine/S-adenosylhomocysteine nucleosidase</fullName>
        <shortName evidence="1">MTA/SAH nucleosidase</shortName>
        <shortName evidence="1">MTAN</shortName>
        <ecNumber evidence="1">3.2.2.9</ecNumber>
    </recommendedName>
    <alternativeName>
        <fullName evidence="1">5'-deoxyadenosine nucleosidase</fullName>
        <shortName evidence="1">DOA nucleosidase</shortName>
        <shortName evidence="1">dAdo nucleosidase</shortName>
    </alternativeName>
    <alternativeName>
        <fullName evidence="1">5'-methylthioadenosine nucleosidase</fullName>
        <shortName evidence="1">MTA nucleosidase</shortName>
    </alternativeName>
    <alternativeName>
        <fullName evidence="1">S-adenosylhomocysteine nucleosidase</fullName>
        <shortName evidence="1">AdoHcy nucleosidase</shortName>
        <shortName evidence="1">SAH nucleosidase</shortName>
        <shortName evidence="1">SRH nucleosidase</shortName>
    </alternativeName>
</protein>
<proteinExistence type="inferred from homology"/>
<feature type="chain" id="PRO_0000164438" description="5'-methylthioadenosine/S-adenosylhomocysteine nucleosidase">
    <location>
        <begin position="1"/>
        <end position="252"/>
    </location>
</feature>
<feature type="active site" description="Proton acceptor" evidence="1">
    <location>
        <position position="20"/>
    </location>
</feature>
<feature type="active site" description="Proton donor" evidence="1">
    <location>
        <position position="205"/>
    </location>
</feature>
<feature type="binding site" evidence="1">
    <location>
        <position position="86"/>
    </location>
    <ligand>
        <name>substrate</name>
    </ligand>
</feature>
<feature type="binding site" evidence="1">
    <location>
        <position position="160"/>
    </location>
    <ligand>
        <name>substrate</name>
    </ligand>
</feature>
<feature type="binding site" evidence="1">
    <location>
        <begin position="181"/>
        <end position="182"/>
    </location>
    <ligand>
        <name>substrate</name>
    </ligand>
</feature>